<keyword id="KW-0134">Cell wall</keyword>
<keyword id="KW-0961">Cell wall biogenesis/degradation</keyword>
<keyword id="KW-1015">Disulfide bond</keyword>
<keyword id="KW-0325">Glycoprotein</keyword>
<keyword id="KW-0326">Glycosidase</keyword>
<keyword id="KW-0328">Glycosyltransferase</keyword>
<keyword id="KW-0336">GPI-anchor</keyword>
<keyword id="KW-0378">Hydrolase</keyword>
<keyword id="KW-0449">Lipoprotein</keyword>
<keyword id="KW-0472">Membrane</keyword>
<keyword id="KW-1185">Reference proteome</keyword>
<keyword id="KW-0964">Secreted</keyword>
<keyword id="KW-0732">Signal</keyword>
<keyword id="KW-0808">Transferase</keyword>
<keyword id="KW-0843">Virulence</keyword>
<name>CRH11_CANAL</name>
<evidence type="ECO:0000250" key="1"/>
<evidence type="ECO:0000250" key="2">
    <source>
        <dbReference type="UniProtKB" id="P27051"/>
    </source>
</evidence>
<evidence type="ECO:0000250" key="3">
    <source>
        <dbReference type="UniProtKB" id="Q8J0P4"/>
    </source>
</evidence>
<evidence type="ECO:0000255" key="4"/>
<evidence type="ECO:0000255" key="5">
    <source>
        <dbReference type="PROSITE-ProRule" id="PRU01098"/>
    </source>
</evidence>
<evidence type="ECO:0000256" key="6">
    <source>
        <dbReference type="SAM" id="MobiDB-lite"/>
    </source>
</evidence>
<evidence type="ECO:0000269" key="7">
    <source>
    </source>
</evidence>
<evidence type="ECO:0000269" key="8">
    <source>
    </source>
</evidence>
<evidence type="ECO:0000269" key="9">
    <source>
    </source>
</evidence>
<evidence type="ECO:0000269" key="10">
    <source>
    </source>
</evidence>
<evidence type="ECO:0000269" key="11">
    <source>
    </source>
</evidence>
<evidence type="ECO:0000269" key="12">
    <source>
    </source>
</evidence>
<evidence type="ECO:0000269" key="13">
    <source>
    </source>
</evidence>
<evidence type="ECO:0000269" key="14">
    <source>
    </source>
</evidence>
<evidence type="ECO:0000269" key="15">
    <source>
    </source>
</evidence>
<evidence type="ECO:0000269" key="16">
    <source>
    </source>
</evidence>
<evidence type="ECO:0000269" key="17">
    <source>
    </source>
</evidence>
<evidence type="ECO:0000269" key="18">
    <source>
    </source>
</evidence>
<evidence type="ECO:0000269" key="19">
    <source>
    </source>
</evidence>
<evidence type="ECO:0000303" key="20">
    <source>
    </source>
</evidence>
<evidence type="ECO:0000305" key="21"/>
<feature type="signal peptide" evidence="4">
    <location>
        <begin position="1"/>
        <end position="21"/>
    </location>
</feature>
<feature type="chain" id="PRO_0000424859" description="Crh-like protein CRH11">
    <location>
        <begin position="22"/>
        <end position="430"/>
    </location>
</feature>
<feature type="propeptide" id="PRO_0000424860" description="Removed in mature form" evidence="4">
    <location>
        <begin position="431"/>
        <end position="453"/>
    </location>
</feature>
<feature type="domain" description="GH16" evidence="5">
    <location>
        <begin position="28"/>
        <end position="227"/>
    </location>
</feature>
<feature type="region of interest" description="Disordered" evidence="6">
    <location>
        <begin position="281"/>
        <end position="343"/>
    </location>
</feature>
<feature type="region of interest" description="Disordered" evidence="6">
    <location>
        <begin position="362"/>
        <end position="397"/>
    </location>
</feature>
<feature type="region of interest" description="Disordered" evidence="6">
    <location>
        <begin position="410"/>
        <end position="430"/>
    </location>
</feature>
<feature type="compositionally biased region" description="Low complexity" evidence="6">
    <location>
        <begin position="286"/>
        <end position="343"/>
    </location>
</feature>
<feature type="compositionally biased region" description="Low complexity" evidence="6">
    <location>
        <begin position="363"/>
        <end position="397"/>
    </location>
</feature>
<feature type="compositionally biased region" description="Low complexity" evidence="6">
    <location>
        <begin position="412"/>
        <end position="425"/>
    </location>
</feature>
<feature type="active site" description="Nucleophile" evidence="2">
    <location>
        <position position="119"/>
    </location>
</feature>
<feature type="active site" description="Proton donor" evidence="2">
    <location>
        <position position="123"/>
    </location>
</feature>
<feature type="binding site" evidence="3">
    <location>
        <position position="123"/>
    </location>
    <ligand>
        <name>chitin</name>
        <dbReference type="ChEBI" id="CHEBI:17029"/>
    </ligand>
</feature>
<feature type="binding site" evidence="3">
    <location>
        <position position="204"/>
    </location>
    <ligand>
        <name>chitin</name>
        <dbReference type="ChEBI" id="CHEBI:17029"/>
    </ligand>
</feature>
<feature type="binding site" evidence="3">
    <location>
        <position position="215"/>
    </location>
    <ligand>
        <name>chitin</name>
        <dbReference type="ChEBI" id="CHEBI:17029"/>
    </ligand>
</feature>
<feature type="lipid moiety-binding region" description="GPI-anchor amidated asparagine" evidence="4">
    <location>
        <position position="430"/>
    </location>
</feature>
<feature type="glycosylation site" description="N-linked (GlcNAc...) asparagine" evidence="4">
    <location>
        <position position="290"/>
    </location>
</feature>
<feature type="disulfide bond" evidence="3">
    <location>
        <begin position="24"/>
        <end position="32"/>
    </location>
</feature>
<reference key="1">
    <citation type="journal article" date="2004" name="Proc. Natl. Acad. Sci. U.S.A.">
        <title>The diploid genome sequence of Candida albicans.</title>
        <authorList>
            <person name="Jones T."/>
            <person name="Federspiel N.A."/>
            <person name="Chibana H."/>
            <person name="Dungan J."/>
            <person name="Kalman S."/>
            <person name="Magee B.B."/>
            <person name="Newport G."/>
            <person name="Thorstenson Y.R."/>
            <person name="Agabian N."/>
            <person name="Magee P.T."/>
            <person name="Davis R.W."/>
            <person name="Scherer S."/>
        </authorList>
    </citation>
    <scope>NUCLEOTIDE SEQUENCE [LARGE SCALE GENOMIC DNA]</scope>
    <source>
        <strain>SC5314 / ATCC MYA-2876</strain>
    </source>
</reference>
<reference key="2">
    <citation type="journal article" date="2007" name="Genome Biol.">
        <title>Assembly of the Candida albicans genome into sixteen supercontigs aligned on the eight chromosomes.</title>
        <authorList>
            <person name="van het Hoog M."/>
            <person name="Rast T.J."/>
            <person name="Martchenko M."/>
            <person name="Grindle S."/>
            <person name="Dignard D."/>
            <person name="Hogues H."/>
            <person name="Cuomo C."/>
            <person name="Berriman M."/>
            <person name="Scherer S."/>
            <person name="Magee B.B."/>
            <person name="Whiteway M."/>
            <person name="Chibana H."/>
            <person name="Nantel A."/>
            <person name="Magee P.T."/>
        </authorList>
    </citation>
    <scope>GENOME REANNOTATION</scope>
    <source>
        <strain>SC5314 / ATCC MYA-2876</strain>
    </source>
</reference>
<reference key="3">
    <citation type="journal article" date="2013" name="Genome Biol.">
        <title>Assembly of a phased diploid Candida albicans genome facilitates allele-specific measurements and provides a simple model for repeat and indel structure.</title>
        <authorList>
            <person name="Muzzey D."/>
            <person name="Schwartz K."/>
            <person name="Weissman J.S."/>
            <person name="Sherlock G."/>
        </authorList>
    </citation>
    <scope>NUCLEOTIDE SEQUENCE [LARGE SCALE GENOMIC DNA]</scope>
    <scope>GENOME REANNOTATION</scope>
    <source>
        <strain>SC5314 / ATCC MYA-2876</strain>
    </source>
</reference>
<reference key="4">
    <citation type="journal article" date="2003" name="Yeast">
        <title>Genome-wide identification of fungal GPI proteins.</title>
        <authorList>
            <person name="De Groot P.W."/>
            <person name="Hellingwerf K.J."/>
            <person name="Klis F.M."/>
        </authorList>
    </citation>
    <scope>PREDICTION OF GPI-ANCHOR</scope>
</reference>
<reference key="5">
    <citation type="journal article" date="2004" name="Eukaryot. Cell">
        <title>Proteomic analysis of Candida albicans cell walls reveals covalently bound carbohydrate-active enzymes and adhesins.</title>
        <authorList>
            <person name="de Groot P.W."/>
            <person name="de Boer A.D."/>
            <person name="Cunningham J."/>
            <person name="Dekker H.L."/>
            <person name="de Jong L."/>
            <person name="Hellingwerf K.J."/>
            <person name="de Koster C."/>
            <person name="Klis F.M."/>
        </authorList>
    </citation>
    <scope>IDENTIFICATION BY MASS SPECTROMETRY</scope>
    <scope>SUBCELLULAR LOCATION</scope>
</reference>
<reference key="6">
    <citation type="journal article" date="2004" name="Yeast">
        <title>Identification of potential cell-surface proteins in Candida albicans and investigation of the role of a putative cell-surface glycosidase in adhesion and virulence.</title>
        <authorList>
            <person name="Alberti-Segui C."/>
            <person name="Morales A.J."/>
            <person name="Xing H."/>
            <person name="Kessler M.M."/>
            <person name="Willins D.A."/>
            <person name="Weinstock K.G."/>
            <person name="Cottarel G."/>
            <person name="Fechtel K."/>
            <person name="Rogers B."/>
        </authorList>
    </citation>
    <scope>IDENTIFICATION</scope>
</reference>
<reference key="7">
    <citation type="journal article" date="2005" name="Antimicrob. Agents Chemother.">
        <title>Genome-wide expression profiling of the response to azole, polyene, echinocandin, and pyrimidine antifungal agents in Candida albicans.</title>
        <authorList>
            <person name="Liu T.T."/>
            <person name="Lee R.E."/>
            <person name="Barker K.S."/>
            <person name="Lee R.E."/>
            <person name="Wei L."/>
            <person name="Homayouni R."/>
            <person name="Rogers P.D."/>
        </authorList>
    </citation>
    <scope>INDUCTION</scope>
</reference>
<reference key="8">
    <citation type="journal article" date="2006" name="Fungal Genet. Biol.">
        <title>Genomic response programs of Candida albicans following protoplasting and regeneration.</title>
        <authorList>
            <person name="Castillo L."/>
            <person name="Martinez A.I."/>
            <person name="Garcera A."/>
            <person name="Garcia-Martinez J."/>
            <person name="Ruiz-Herrera J."/>
            <person name="Valentin E."/>
            <person name="Sentandreu R."/>
        </authorList>
    </citation>
    <scope>IDENTIFICATION BY MASS SPECTROMETRY</scope>
    <scope>SUBCELLULAR LOCATION</scope>
    <scope>INDUCTION</scope>
</reference>
<reference key="9">
    <citation type="journal article" date="2006" name="J. Biol. Chem.">
        <title>The CRH family coding for cell wall glycosylphosphatidylinositol proteins with a predicted transglycosidase domain affects cell wall organization and virulence of Candida albicans.</title>
        <authorList>
            <person name="Pardini G."/>
            <person name="De Groot P.W."/>
            <person name="Coste A.T."/>
            <person name="Karababa M."/>
            <person name="Klis F.M."/>
            <person name="de Koster C.G."/>
            <person name="Sanglard D."/>
        </authorList>
    </citation>
    <scope>DISRUPTION PHENOTYPE</scope>
    <scope>INDUCTION</scope>
    <scope>FUNCTION</scope>
</reference>
<reference key="10">
    <citation type="journal article" date="2006" name="PLoS Pathog.">
        <title>Control of the C. albicans cell wall damage response by transcriptional regulator Cas5.</title>
        <authorList>
            <person name="Bruno V.M."/>
            <person name="Kalachikov S."/>
            <person name="Subaran R."/>
            <person name="Nobile C.J."/>
            <person name="Kyratsous C."/>
            <person name="Mitchell A.P."/>
        </authorList>
    </citation>
    <scope>INDUCTION</scope>
</reference>
<reference key="11">
    <citation type="journal article" date="2008" name="Microbiology">
        <title>Hypoxic conditions and iron restriction affect the cell-wall proteome of Candida albicans grown under vagina-simulative conditions.</title>
        <authorList>
            <person name="Sosinska G.J."/>
            <person name="de Groot P.W."/>
            <person name="Teixeira de Mattos M.J."/>
            <person name="Dekker H.L."/>
            <person name="de Koster C.G."/>
            <person name="Hellingwerf K.J."/>
            <person name="Klis F.M."/>
        </authorList>
    </citation>
    <scope>INDUCTION</scope>
</reference>
<reference key="12">
    <citation type="journal article" date="2008" name="Proteomics">
        <title>A study of the Candida albicans cell wall proteome.</title>
        <authorList>
            <person name="Castillo L."/>
            <person name="Calvo E."/>
            <person name="Martinez A.I."/>
            <person name="Ruiz-Herrera J."/>
            <person name="Valentin E."/>
            <person name="Lopez J.A."/>
            <person name="Sentandreu R."/>
        </authorList>
    </citation>
    <scope>IDENTIFICATION BY MASS SPECTROMETRY</scope>
    <scope>SUBCELLULAR LOCATION</scope>
</reference>
<reference key="13">
    <citation type="journal article" date="2009" name="Fungal Genet. Biol.">
        <title>Trifluoromethanesulfonic acid-based proteomic analysis of cell wall and secreted proteins of the ascomycetous fungi Neurospora crassa and Candida albicans.</title>
        <authorList>
            <person name="Maddi A."/>
            <person name="Bowman S.M."/>
            <person name="Free S.J."/>
        </authorList>
    </citation>
    <scope>IDENTIFICATION BY MASS SPECTROMETRY</scope>
    <scope>SUBCELLULAR LOCATION</scope>
    <scope>INDUCTION</scope>
</reference>
<reference key="14">
    <citation type="journal article" date="2011" name="Eukaryot. Cell">
        <title>Effects of fluconazole on the secretome, the wall proteome, and wall integrity of the clinical fungus Candida albicans.</title>
        <authorList>
            <person name="Sorgo A.G."/>
            <person name="Heilmann C.J."/>
            <person name="Dekker H.L."/>
            <person name="Bekker M."/>
            <person name="Brul S."/>
            <person name="de Koster C.G."/>
            <person name="de Koning L.J."/>
            <person name="Klis F.M."/>
        </authorList>
    </citation>
    <scope>INDUCTION</scope>
</reference>
<reference key="15">
    <citation type="journal article" date="2011" name="Microbiology">
        <title>Mass spectrometric quantification of the adaptations in the wall proteome of Candida albicans in response to ambient pH.</title>
        <authorList>
            <person name="Sosinska G.J."/>
            <person name="de Koning L.J."/>
            <person name="de Groot P.W."/>
            <person name="Manders E.M."/>
            <person name="Dekker H.L."/>
            <person name="Hellingwerf K.J."/>
            <person name="de Koster C.G."/>
            <person name="Klis F.M."/>
        </authorList>
    </citation>
    <scope>IDENTIFICATION BY MASS SPECTROMETRY</scope>
    <scope>SUBCELLULAR LOCATION</scope>
</reference>
<reference key="16">
    <citation type="journal article" date="2011" name="Microbiology">
        <title>Hyphal induction in the human fungal pathogen Candida albicans reveals a characteristic wall protein profile.</title>
        <authorList>
            <person name="Heilmann C.J."/>
            <person name="Sorgo A.G."/>
            <person name="Siliakus A.R."/>
            <person name="Dekker H.L."/>
            <person name="Brul S."/>
            <person name="de Koster C.G."/>
            <person name="de Koning L.J."/>
            <person name="Klis F.M."/>
        </authorList>
    </citation>
    <scope>IDENTIFICATION BY MASS SPECTROMETRY</scope>
    <scope>SUBCELLULAR LOCATION</scope>
    <scope>INDUCTION</scope>
</reference>
<reference key="17">
    <citation type="journal article" date="2013" name="Eukaryot. Cell">
        <title>Surface stress induces a conserved cell wall stress response in the pathogenic fungus Candida albicans.</title>
        <authorList>
            <person name="Heilmann C.J."/>
            <person name="Sorgo A.G."/>
            <person name="Mohammadi S."/>
            <person name="Sosinska G.J."/>
            <person name="de Koster C.G."/>
            <person name="Brul S."/>
            <person name="de Koning L.J."/>
            <person name="Klis F.M."/>
        </authorList>
    </citation>
    <scope>IDENTIFICATION BY MASS SPECTROMETRY</scope>
    <scope>SUBCELLULAR LOCATION</scope>
    <scope>INDUCTION</scope>
</reference>
<reference key="18">
    <citation type="journal article" date="2013" name="Int. J. Med. Microbiol.">
        <title>The P-type ATPase Spf1 is required for endoplasmic reticulum functions and cell wall integrity in Candida albicans.</title>
        <authorList>
            <person name="Yu Q."/>
            <person name="Ding X."/>
            <person name="Zhang B."/>
            <person name="Xu N."/>
            <person name="Cheng X."/>
            <person name="Qian K."/>
            <person name="Zhang B."/>
            <person name="Xing L."/>
            <person name="Li M."/>
        </authorList>
    </citation>
    <scope>INDUCTION</scope>
</reference>
<dbReference type="EC" id="3.2.1.14" evidence="3"/>
<dbReference type="EC" id="2.4.-.-" evidence="3"/>
<dbReference type="EMBL" id="CP017626">
    <property type="protein sequence ID" value="AOW29056.1"/>
    <property type="molecule type" value="Genomic_DNA"/>
</dbReference>
<dbReference type="RefSeq" id="XP_720457.1">
    <property type="nucleotide sequence ID" value="XM_715364.1"/>
</dbReference>
<dbReference type="SMR" id="Q5AFA2"/>
<dbReference type="BioGRID" id="1220999">
    <property type="interactions" value="2"/>
</dbReference>
<dbReference type="FunCoup" id="Q5AFA2">
    <property type="interactions" value="34"/>
</dbReference>
<dbReference type="STRING" id="237561.Q5AFA2"/>
<dbReference type="CAZy" id="GH16">
    <property type="family name" value="Glycoside Hydrolase Family 16"/>
</dbReference>
<dbReference type="GlyCosmos" id="Q5AFA2">
    <property type="glycosylation" value="1 site, No reported glycans"/>
</dbReference>
<dbReference type="EnsemblFungi" id="C4_02900C_A-T">
    <property type="protein sequence ID" value="C4_02900C_A-T-p1"/>
    <property type="gene ID" value="C4_02900C_A"/>
</dbReference>
<dbReference type="GeneID" id="3637905"/>
<dbReference type="KEGG" id="cal:CAALFM_C402900CA"/>
<dbReference type="CGD" id="CAL0000181029">
    <property type="gene designation" value="CRH11"/>
</dbReference>
<dbReference type="VEuPathDB" id="FungiDB:C4_02900C_A"/>
<dbReference type="eggNOG" id="ENOG502QQ71">
    <property type="taxonomic scope" value="Eukaryota"/>
</dbReference>
<dbReference type="HOGENOM" id="CLU_027506_2_2_1"/>
<dbReference type="InParanoid" id="Q5AFA2"/>
<dbReference type="OrthoDB" id="4781at2759"/>
<dbReference type="PRO" id="PR:Q5AFA2"/>
<dbReference type="Proteomes" id="UP000000559">
    <property type="component" value="Chromosome 4"/>
</dbReference>
<dbReference type="GO" id="GO:0009986">
    <property type="term" value="C:cell surface"/>
    <property type="evidence" value="ECO:0000314"/>
    <property type="project" value="CGD"/>
</dbReference>
<dbReference type="GO" id="GO:0005576">
    <property type="term" value="C:extracellular region"/>
    <property type="evidence" value="ECO:0000314"/>
    <property type="project" value="CGD"/>
</dbReference>
<dbReference type="GO" id="GO:1903561">
    <property type="term" value="C:extracellular vesicle"/>
    <property type="evidence" value="ECO:0000314"/>
    <property type="project" value="CGD"/>
</dbReference>
<dbReference type="GO" id="GO:0009277">
    <property type="term" value="C:fungal-type cell wall"/>
    <property type="evidence" value="ECO:0000314"/>
    <property type="project" value="CGD"/>
</dbReference>
<dbReference type="GO" id="GO:0030446">
    <property type="term" value="C:hyphal cell wall"/>
    <property type="evidence" value="ECO:0000314"/>
    <property type="project" value="CGD"/>
</dbReference>
<dbReference type="GO" id="GO:0005886">
    <property type="term" value="C:plasma membrane"/>
    <property type="evidence" value="ECO:0000314"/>
    <property type="project" value="CGD"/>
</dbReference>
<dbReference type="GO" id="GO:0098552">
    <property type="term" value="C:side of membrane"/>
    <property type="evidence" value="ECO:0007669"/>
    <property type="project" value="UniProtKB-KW"/>
</dbReference>
<dbReference type="GO" id="GO:0030445">
    <property type="term" value="C:yeast-form cell wall"/>
    <property type="evidence" value="ECO:0000314"/>
    <property type="project" value="CGD"/>
</dbReference>
<dbReference type="GO" id="GO:0016757">
    <property type="term" value="F:glycosyltransferase activity"/>
    <property type="evidence" value="ECO:0000318"/>
    <property type="project" value="GO_Central"/>
</dbReference>
<dbReference type="GO" id="GO:0004553">
    <property type="term" value="F:hydrolase activity, hydrolyzing O-glycosyl compounds"/>
    <property type="evidence" value="ECO:0007669"/>
    <property type="project" value="InterPro"/>
</dbReference>
<dbReference type="GO" id="GO:0005975">
    <property type="term" value="P:carbohydrate metabolic process"/>
    <property type="evidence" value="ECO:0007669"/>
    <property type="project" value="InterPro"/>
</dbReference>
<dbReference type="GO" id="GO:0006030">
    <property type="term" value="P:chitin metabolic process"/>
    <property type="evidence" value="ECO:0000318"/>
    <property type="project" value="GO_Central"/>
</dbReference>
<dbReference type="GO" id="GO:0031505">
    <property type="term" value="P:fungal-type cell wall organization"/>
    <property type="evidence" value="ECO:0000315"/>
    <property type="project" value="CGD"/>
</dbReference>
<dbReference type="CDD" id="cd02183">
    <property type="entry name" value="GH16_fungal_CRH1_transglycosylase"/>
    <property type="match status" value="1"/>
</dbReference>
<dbReference type="FunFam" id="2.60.120.200:FF:000162">
    <property type="entry name" value="Glycosidase"/>
    <property type="match status" value="1"/>
</dbReference>
<dbReference type="Gene3D" id="2.60.120.200">
    <property type="match status" value="1"/>
</dbReference>
<dbReference type="InterPro" id="IPR013320">
    <property type="entry name" value="ConA-like_dom_sf"/>
</dbReference>
<dbReference type="InterPro" id="IPR000757">
    <property type="entry name" value="GH16"/>
</dbReference>
<dbReference type="InterPro" id="IPR017168">
    <property type="entry name" value="Glyco_hydro_16_CRH1_prd"/>
</dbReference>
<dbReference type="InterPro" id="IPR050546">
    <property type="entry name" value="Glycosyl_Hydrlase_16"/>
</dbReference>
<dbReference type="PANTHER" id="PTHR10963:SF68">
    <property type="entry name" value="GLYCOSIDASE CRH1-RELATED"/>
    <property type="match status" value="1"/>
</dbReference>
<dbReference type="PANTHER" id="PTHR10963">
    <property type="entry name" value="GLYCOSYL HYDROLASE-RELATED"/>
    <property type="match status" value="1"/>
</dbReference>
<dbReference type="Pfam" id="PF00722">
    <property type="entry name" value="Glyco_hydro_16"/>
    <property type="match status" value="1"/>
</dbReference>
<dbReference type="PIRSF" id="PIRSF037299">
    <property type="entry name" value="Glycosidase_CRH1_prd"/>
    <property type="match status" value="1"/>
</dbReference>
<dbReference type="SUPFAM" id="SSF49899">
    <property type="entry name" value="Concanavalin A-like lectins/glucanases"/>
    <property type="match status" value="1"/>
</dbReference>
<dbReference type="PROSITE" id="PS51762">
    <property type="entry name" value="GH16_2"/>
    <property type="match status" value="1"/>
</dbReference>
<organism>
    <name type="scientific">Candida albicans (strain SC5314 / ATCC MYA-2876)</name>
    <name type="common">Yeast</name>
    <dbReference type="NCBI Taxonomy" id="237561"/>
    <lineage>
        <taxon>Eukaryota</taxon>
        <taxon>Fungi</taxon>
        <taxon>Dikarya</taxon>
        <taxon>Ascomycota</taxon>
        <taxon>Saccharomycotina</taxon>
        <taxon>Pichiomycetes</taxon>
        <taxon>Debaryomycetaceae</taxon>
        <taxon>Candida/Lodderomyces clade</taxon>
        <taxon>Candida</taxon>
    </lineage>
</organism>
<accession>Q5AFA2</accession>
<accession>A0A1D8PLP4</accession>
<protein>
    <recommendedName>
        <fullName evidence="20">Crh-like protein CRH11</fullName>
    </recommendedName>
    <alternativeName>
        <fullName evidence="20">Congo red hypersensitive protein 11</fullName>
    </alternativeName>
    <domain>
        <recommendedName>
            <fullName evidence="3">Chitinase CRH11</fullName>
            <ecNumber evidence="3">3.2.1.14</ecNumber>
        </recommendedName>
    </domain>
    <domain>
        <recommendedName>
            <fullName evidence="3">Chitin transglycosylase CRH11</fullName>
            <ecNumber evidence="3">2.4.-.-</ecNumber>
        </recommendedName>
    </domain>
</protein>
<proteinExistence type="evidence at protein level"/>
<comment type="function">
    <text evidence="3 11">Dual chitinase/transglycosylase that plays a role in cell wall architecture (PubMed:17074760). Chitinase and transglycosylase activities are coupled (By similarity). Required for the polysaccharide cross-linking at the septa and the cell wall (By similarity). More specifically, transfers chitin to 1,6-beta-glucan in the cell wall (By similarity). Plays an important role in fungal pathogenesis via its functions in cell wall assembly and regeneration, filamentation, and adherence to host cells (PubMed:17074760).</text>
</comment>
<comment type="catalytic activity">
    <reaction evidence="3">
        <text>Random endo-hydrolysis of N-acetyl-beta-D-glucosaminide (1-&gt;4)-beta-linkages in chitin and chitodextrins.</text>
        <dbReference type="EC" id="3.2.1.14"/>
    </reaction>
</comment>
<comment type="subcellular location">
    <subcellularLocation>
        <location evidence="7 9 13 14 15 16 18">Secreted</location>
        <location evidence="7 9 13 14 15 16 18">Cell wall</location>
    </subcellularLocation>
    <subcellularLocation>
        <location evidence="1">Membrane</location>
        <topology evidence="1">Lipid-anchor</topology>
        <topology evidence="1">GPI-anchor</topology>
    </subcellularLocation>
    <text>Covalently-linked GPI-modified cell wall protein (GPI-CWP).</text>
</comment>
<comment type="induction">
    <text evidence="8 9 10 11 12 14 16 17 18 19">Expressed in cell walls of both yeast and hyphae cells. Up-regulated by growth in hypoxic conditions, during cell wall regeneration, by heat stress, as well as by calcineurin, caspofungin, and fluconazole. Expression is also regulated by CAS5, RLM1, and SPF1.</text>
</comment>
<comment type="PTM">
    <text evidence="21">The GPI-anchor is attached to the protein in the endoplasmic reticulum and serves to target the protein to the cell surface. There, the glucosamine-inositol phospholipid moiety is cleaved off and the GPI-modified mannoprotein is covalently attached via its lipidless GPI glycan remnant to the 1,6-beta-glucan of the outer cell wall layer.</text>
</comment>
<comment type="disruption phenotype">
    <text evidence="11">Leads to increased susceptibility to cell wall-perturbing agents.</text>
</comment>
<comment type="similarity">
    <text evidence="21">Belongs to the glycosyl hydrolase 16 family. CRH1 subfamily.</text>
</comment>
<gene>
    <name type="primary">CRH11</name>
    <name type="synonym">CRH1</name>
    <name type="ordered locus">CAALFM_C402900CA</name>
    <name type="ORF">CaO19.10221</name>
    <name type="ORF">CaO19.2706</name>
</gene>
<sequence length="453" mass="46733">MKFTTLATIASTLLFAANANADTCNPLKSSDCSPVPALGSSFLEKFDNGLGPHFESLKKQGTIDSGSNGLSLTMKKRFDNPSFKSNFYIMFGRVEVVLKGAEGKGIVSSFYLQSDDLDEIDIEMFGGDPYQWQSNYFIKGNTATYDRGGYHDIANPLKDYHTYVIDWTKDAVTWSVDGSVIRTIPKDNAQGFPQSPMAIYAGIWAGGDPSNQPGTIDWAGGITDYSQAPFTMGIKSVLVADYSSGKQYSYSDQSGSWESIKADGGKVNGRYDQAQDDIKKLESGQSVDSNDSSSSPSASSSDSSSTSSASSSSSSSSPSSTTSSSSSSSSSSSSSSSSSSEKSNAVPSASVIVFIGTKGGDKTTVTSSSGVSVPTSASVSTAAGTTSGSANSAPASAASSTASTVFISTGDAAPSSSASEKPSVSTTENNGAVSVAKTTSLFGFVALIGFLFV</sequence>